<evidence type="ECO:0000255" key="1">
    <source>
        <dbReference type="HAMAP-Rule" id="MF_00377"/>
    </source>
</evidence>
<evidence type="ECO:0000256" key="2">
    <source>
        <dbReference type="SAM" id="MobiDB-lite"/>
    </source>
</evidence>
<sequence length="508" mass="56797">MADDPGSSFTTVWNAVVSELNGEPVADAEPNRTTLVTPLTPQQRAWLNLVRPLTIVEGFALLSVPSSFVQNEIERHLRAPITDALSRRLGQQIQLGVRIAPPPDDVEDALIPSAEPFPDTDADLSARRRTDSRASGERGAVTNTQPGWTNYFTERPHAIDPAVAAGTSLNRRYTFDTFVIGASNRFAHAAVLAIAEAPARAYNPLFIWGESGLGKTHLLHAAGNYAQRFFPGMRVKYVSTEEFTNDFINSLRDDRKVPFKRTIRDVDVLLVDDIQFIEGKEGIQEEFFHTFNTLHNANKQIVISSDRPPKQLATLEDRLRTRFEWGLITDVQPPELETRIAILRKKAQMERLAVPDDVLELIASSIERNIRELEGALIRVTAFASLNKTPIDKSLAEIVLRDLIADASTMQISAATIMAATAEYFDTTVVELRGPGKTRALAQSRQIAMYLCRELTDLSLPKIGQAFGRDHTTLMYGQRKILSEMAERRGGFDHVKELTTRIRQRSKR</sequence>
<protein>
    <recommendedName>
        <fullName evidence="1">Chromosomal replication initiator protein DnaA</fullName>
    </recommendedName>
</protein>
<proteinExistence type="inferred from homology"/>
<dbReference type="EMBL" id="U19185">
    <property type="protein sequence ID" value="AAC83390.1"/>
    <property type="molecule type" value="Genomic_DNA"/>
</dbReference>
<dbReference type="PIR" id="PC4083">
    <property type="entry name" value="PC4083"/>
</dbReference>
<dbReference type="SMR" id="P49990"/>
<dbReference type="GO" id="GO:0005737">
    <property type="term" value="C:cytoplasm"/>
    <property type="evidence" value="ECO:0007669"/>
    <property type="project" value="UniProtKB-SubCell"/>
</dbReference>
<dbReference type="GO" id="GO:0005886">
    <property type="term" value="C:plasma membrane"/>
    <property type="evidence" value="ECO:0007669"/>
    <property type="project" value="TreeGrafter"/>
</dbReference>
<dbReference type="GO" id="GO:0005524">
    <property type="term" value="F:ATP binding"/>
    <property type="evidence" value="ECO:0007669"/>
    <property type="project" value="UniProtKB-UniRule"/>
</dbReference>
<dbReference type="GO" id="GO:0016887">
    <property type="term" value="F:ATP hydrolysis activity"/>
    <property type="evidence" value="ECO:0007669"/>
    <property type="project" value="InterPro"/>
</dbReference>
<dbReference type="GO" id="GO:0003688">
    <property type="term" value="F:DNA replication origin binding"/>
    <property type="evidence" value="ECO:0007669"/>
    <property type="project" value="UniProtKB-UniRule"/>
</dbReference>
<dbReference type="GO" id="GO:0008289">
    <property type="term" value="F:lipid binding"/>
    <property type="evidence" value="ECO:0007669"/>
    <property type="project" value="UniProtKB-KW"/>
</dbReference>
<dbReference type="GO" id="GO:0006270">
    <property type="term" value="P:DNA replication initiation"/>
    <property type="evidence" value="ECO:0007669"/>
    <property type="project" value="UniProtKB-UniRule"/>
</dbReference>
<dbReference type="GO" id="GO:0006275">
    <property type="term" value="P:regulation of DNA replication"/>
    <property type="evidence" value="ECO:0007669"/>
    <property type="project" value="UniProtKB-UniRule"/>
</dbReference>
<dbReference type="CDD" id="cd00009">
    <property type="entry name" value="AAA"/>
    <property type="match status" value="1"/>
</dbReference>
<dbReference type="CDD" id="cd06571">
    <property type="entry name" value="Bac_DnaA_C"/>
    <property type="match status" value="1"/>
</dbReference>
<dbReference type="FunFam" id="1.10.1750.10:FF:000002">
    <property type="entry name" value="Chromosomal replication initiator protein DnaA"/>
    <property type="match status" value="1"/>
</dbReference>
<dbReference type="FunFam" id="1.10.8.60:FF:000003">
    <property type="entry name" value="Chromosomal replication initiator protein DnaA"/>
    <property type="match status" value="1"/>
</dbReference>
<dbReference type="FunFam" id="3.40.50.300:FF:000150">
    <property type="entry name" value="Chromosomal replication initiator protein DnaA"/>
    <property type="match status" value="1"/>
</dbReference>
<dbReference type="Gene3D" id="1.10.1750.10">
    <property type="match status" value="1"/>
</dbReference>
<dbReference type="Gene3D" id="1.10.8.60">
    <property type="match status" value="1"/>
</dbReference>
<dbReference type="Gene3D" id="3.30.300.180">
    <property type="match status" value="1"/>
</dbReference>
<dbReference type="Gene3D" id="3.40.50.300">
    <property type="entry name" value="P-loop containing nucleotide triphosphate hydrolases"/>
    <property type="match status" value="1"/>
</dbReference>
<dbReference type="HAMAP" id="MF_00377">
    <property type="entry name" value="DnaA_bact"/>
    <property type="match status" value="1"/>
</dbReference>
<dbReference type="InterPro" id="IPR003593">
    <property type="entry name" value="AAA+_ATPase"/>
</dbReference>
<dbReference type="InterPro" id="IPR001957">
    <property type="entry name" value="Chromosome_initiator_DnaA"/>
</dbReference>
<dbReference type="InterPro" id="IPR020591">
    <property type="entry name" value="Chromosome_initiator_DnaA-like"/>
</dbReference>
<dbReference type="InterPro" id="IPR018312">
    <property type="entry name" value="Chromosome_initiator_DnaA_CS"/>
</dbReference>
<dbReference type="InterPro" id="IPR013159">
    <property type="entry name" value="DnaA_C"/>
</dbReference>
<dbReference type="InterPro" id="IPR013317">
    <property type="entry name" value="DnaA_dom"/>
</dbReference>
<dbReference type="InterPro" id="IPR038454">
    <property type="entry name" value="DnaA_N_sf"/>
</dbReference>
<dbReference type="InterPro" id="IPR027417">
    <property type="entry name" value="P-loop_NTPase"/>
</dbReference>
<dbReference type="InterPro" id="IPR010921">
    <property type="entry name" value="Trp_repressor/repl_initiator"/>
</dbReference>
<dbReference type="NCBIfam" id="TIGR00362">
    <property type="entry name" value="DnaA"/>
    <property type="match status" value="1"/>
</dbReference>
<dbReference type="NCBIfam" id="NF010686">
    <property type="entry name" value="PRK14086.1"/>
    <property type="match status" value="1"/>
</dbReference>
<dbReference type="PANTHER" id="PTHR30050">
    <property type="entry name" value="CHROMOSOMAL REPLICATION INITIATOR PROTEIN DNAA"/>
    <property type="match status" value="1"/>
</dbReference>
<dbReference type="PANTHER" id="PTHR30050:SF2">
    <property type="entry name" value="CHROMOSOMAL REPLICATION INITIATOR PROTEIN DNAA"/>
    <property type="match status" value="1"/>
</dbReference>
<dbReference type="Pfam" id="PF00308">
    <property type="entry name" value="Bac_DnaA"/>
    <property type="match status" value="1"/>
</dbReference>
<dbReference type="Pfam" id="PF08299">
    <property type="entry name" value="Bac_DnaA_C"/>
    <property type="match status" value="1"/>
</dbReference>
<dbReference type="PRINTS" id="PR00051">
    <property type="entry name" value="DNAA"/>
</dbReference>
<dbReference type="SMART" id="SM00382">
    <property type="entry name" value="AAA"/>
    <property type="match status" value="1"/>
</dbReference>
<dbReference type="SMART" id="SM00760">
    <property type="entry name" value="Bac_DnaA_C"/>
    <property type="match status" value="1"/>
</dbReference>
<dbReference type="SUPFAM" id="SSF52540">
    <property type="entry name" value="P-loop containing nucleoside triphosphate hydrolases"/>
    <property type="match status" value="1"/>
</dbReference>
<dbReference type="SUPFAM" id="SSF48295">
    <property type="entry name" value="TrpR-like"/>
    <property type="match status" value="1"/>
</dbReference>
<dbReference type="PROSITE" id="PS01008">
    <property type="entry name" value="DNAA"/>
    <property type="match status" value="1"/>
</dbReference>
<feature type="chain" id="PRO_0000114209" description="Chromosomal replication initiator protein DnaA">
    <location>
        <begin position="1"/>
        <end position="508"/>
    </location>
</feature>
<feature type="region of interest" description="Domain I, interacts with DnaA modulators" evidence="1">
    <location>
        <begin position="1"/>
        <end position="91"/>
    </location>
</feature>
<feature type="region of interest" description="Domain II" evidence="1">
    <location>
        <begin position="91"/>
        <end position="167"/>
    </location>
</feature>
<feature type="region of interest" description="Disordered" evidence="2">
    <location>
        <begin position="104"/>
        <end position="152"/>
    </location>
</feature>
<feature type="region of interest" description="Domain III, AAA+ region" evidence="1">
    <location>
        <begin position="168"/>
        <end position="384"/>
    </location>
</feature>
<feature type="region of interest" description="Domain IV, binds dsDNA" evidence="1">
    <location>
        <begin position="385"/>
        <end position="508"/>
    </location>
</feature>
<feature type="compositionally biased region" description="Basic and acidic residues" evidence="2">
    <location>
        <begin position="124"/>
        <end position="136"/>
    </location>
</feature>
<feature type="compositionally biased region" description="Polar residues" evidence="2">
    <location>
        <begin position="141"/>
        <end position="152"/>
    </location>
</feature>
<feature type="binding site" evidence="1">
    <location>
        <position position="212"/>
    </location>
    <ligand>
        <name>ATP</name>
        <dbReference type="ChEBI" id="CHEBI:30616"/>
    </ligand>
</feature>
<feature type="binding site" evidence="1">
    <location>
        <position position="214"/>
    </location>
    <ligand>
        <name>ATP</name>
        <dbReference type="ChEBI" id="CHEBI:30616"/>
    </ligand>
</feature>
<feature type="binding site" evidence="1">
    <location>
        <position position="215"/>
    </location>
    <ligand>
        <name>ATP</name>
        <dbReference type="ChEBI" id="CHEBI:30616"/>
    </ligand>
</feature>
<feature type="binding site" evidence="1">
    <location>
        <position position="216"/>
    </location>
    <ligand>
        <name>ATP</name>
        <dbReference type="ChEBI" id="CHEBI:30616"/>
    </ligand>
</feature>
<name>DNAA_MYCAV</name>
<reference key="1">
    <citation type="submission" date="1998-12" db="EMBL/GenBank/DDBJ databases">
        <authorList>
            <person name="Rajagopalan M."/>
        </authorList>
    </citation>
    <scope>NUCLEOTIDE SEQUENCE [GENOMIC DNA]</scope>
</reference>
<reference key="2">
    <citation type="journal article" date="1995" name="Gene">
        <title>Amplification and cloning of the Mycobacterium tuberculosis dnaA gene.</title>
        <authorList>
            <person name="Rajagopalan M."/>
            <person name="Qin M.H."/>
            <person name="Steingrube V.A."/>
            <person name="Nash D.R."/>
            <person name="Wallace R.J. Jr."/>
            <person name="Madiraju M.V.V.S."/>
        </authorList>
    </citation>
    <scope>NUCLEOTIDE SEQUENCE [GENOMIC DNA] OF 214-474</scope>
</reference>
<keyword id="KW-0067">ATP-binding</keyword>
<keyword id="KW-0963">Cytoplasm</keyword>
<keyword id="KW-0235">DNA replication</keyword>
<keyword id="KW-0238">DNA-binding</keyword>
<keyword id="KW-0446">Lipid-binding</keyword>
<keyword id="KW-0547">Nucleotide-binding</keyword>
<comment type="function">
    <text evidence="1">Plays an essential role in the initiation and regulation of chromosomal replication. ATP-DnaA binds to the origin of replication (oriC) to initiate formation of the DNA replication initiation complex once per cell cycle. Binds the DnaA box (a 9 base pair repeat at the origin) and separates the double-stranded (ds)DNA. Forms a right-handed helical filament on oriC DNA; dsDNA binds to the exterior of the filament while single-stranded (ss)DNA is stabiized in the filament's interior. The ATP-DnaA-oriC complex binds and stabilizes one strand of the AT-rich DNA unwinding element (DUE), permitting loading of DNA polymerase. After initiation quickly degrades to an ADP-DnaA complex that is not apt for DNA replication. Binds acidic phospholipids.</text>
</comment>
<comment type="subunit">
    <text evidence="1">Oligomerizes as a right-handed, spiral filament on DNA at oriC.</text>
</comment>
<comment type="subcellular location">
    <subcellularLocation>
        <location evidence="1">Cytoplasm</location>
    </subcellularLocation>
</comment>
<comment type="domain">
    <text evidence="1">Domain I is involved in oligomerization and binding regulators, domain II is flexibile and of varying length in different bacteria, domain III forms the AAA+ region, while domain IV binds dsDNA.</text>
</comment>
<comment type="similarity">
    <text evidence="1">Belongs to the DnaA family.</text>
</comment>
<accession>P49990</accession>
<gene>
    <name evidence="1" type="primary">dnaA</name>
</gene>
<organism>
    <name type="scientific">Mycobacterium avium</name>
    <dbReference type="NCBI Taxonomy" id="1764"/>
    <lineage>
        <taxon>Bacteria</taxon>
        <taxon>Bacillati</taxon>
        <taxon>Actinomycetota</taxon>
        <taxon>Actinomycetes</taxon>
        <taxon>Mycobacteriales</taxon>
        <taxon>Mycobacteriaceae</taxon>
        <taxon>Mycobacterium</taxon>
        <taxon>Mycobacterium avium complex (MAC)</taxon>
    </lineage>
</organism>